<evidence type="ECO:0000250" key="1"/>
<evidence type="ECO:0000255" key="2"/>
<evidence type="ECO:0000255" key="3">
    <source>
        <dbReference type="PROSITE-ProRule" id="PRU00521"/>
    </source>
</evidence>
<evidence type="ECO:0000256" key="4">
    <source>
        <dbReference type="SAM" id="MobiDB-lite"/>
    </source>
</evidence>
<evidence type="ECO:0000305" key="5"/>
<sequence length="436" mass="48437">MDVVDSLLMNGSNITPPCELGLENETLFCLDQPQPSKEWQSAVQILLYSFIFLLSVLGNTLVITVLIRNKRMRTVTNIFLLSLAVSDLMLCLFCMPFNLIPNLLKDFIFGSAVCKTTTYFMGTSVSVSTFNLVAISLERYGAICRPLQSRVWQTKSHALKVIAATWCLSFTIMTPYPIYSNLVPFTKNNNQTANMCRFLLPSDAMQQSWQTFLLLILFLIPGVVMVVAYGLISLELYQGIKFDASQKKSAKEKRLSSGGGGGGGSSSSRYEDSDGCYLQKSRPPRKLELQQLSTSSSGGRINRIRSSGSAANLIAKKRVIRMLIVIVVLFFLCWMPIFSANAWRAYDTVSAEKHLSGTPISFILLLSYTSSCVNPIIYCFMNKRFRLGFMATFPCCPNPGPTGVRGEVGEEEDGRTIRASLSRYSYSHMSTSAPPH</sequence>
<gene>
    <name type="primary">Cckar</name>
</gene>
<dbReference type="EMBL" id="AF015963">
    <property type="protein sequence ID" value="AAC07949.1"/>
    <property type="molecule type" value="Genomic_DNA"/>
</dbReference>
<dbReference type="EMBL" id="AF015959">
    <property type="protein sequence ID" value="AAC07949.1"/>
    <property type="status" value="JOINED"/>
    <property type="molecule type" value="Genomic_DNA"/>
</dbReference>
<dbReference type="EMBL" id="AF015960">
    <property type="protein sequence ID" value="AAC07949.1"/>
    <property type="status" value="JOINED"/>
    <property type="molecule type" value="Genomic_DNA"/>
</dbReference>
<dbReference type="EMBL" id="AF015961">
    <property type="protein sequence ID" value="AAC07949.1"/>
    <property type="status" value="JOINED"/>
    <property type="molecule type" value="Genomic_DNA"/>
</dbReference>
<dbReference type="EMBL" id="AF015962">
    <property type="protein sequence ID" value="AAC07949.1"/>
    <property type="status" value="JOINED"/>
    <property type="molecule type" value="Genomic_DNA"/>
</dbReference>
<dbReference type="EMBL" id="D85605">
    <property type="protein sequence ID" value="BAA20068.1"/>
    <property type="molecule type" value="Genomic_DNA"/>
</dbReference>
<dbReference type="EMBL" id="AK004730">
    <property type="protein sequence ID" value="BAB23512.1"/>
    <property type="molecule type" value="mRNA"/>
</dbReference>
<dbReference type="EMBL" id="BC020534">
    <property type="protein sequence ID" value="AAH20534.1"/>
    <property type="molecule type" value="mRNA"/>
</dbReference>
<dbReference type="CCDS" id="CCDS19293.1"/>
<dbReference type="PIR" id="JC5599">
    <property type="entry name" value="JC5599"/>
</dbReference>
<dbReference type="RefSeq" id="NP_033957.1">
    <property type="nucleotide sequence ID" value="NM_009827.2"/>
</dbReference>
<dbReference type="SMR" id="O08786"/>
<dbReference type="FunCoup" id="O08786">
    <property type="interactions" value="1087"/>
</dbReference>
<dbReference type="STRING" id="10090.ENSMUSP00000031093"/>
<dbReference type="BindingDB" id="O08786"/>
<dbReference type="ChEMBL" id="CHEMBL2798"/>
<dbReference type="DrugCentral" id="O08786"/>
<dbReference type="GuidetoPHARMACOLOGY" id="76"/>
<dbReference type="GlyCosmos" id="O08786">
    <property type="glycosylation" value="3 sites, No reported glycans"/>
</dbReference>
<dbReference type="GlyGen" id="O08786">
    <property type="glycosylation" value="4 sites"/>
</dbReference>
<dbReference type="iPTMnet" id="O08786"/>
<dbReference type="PhosphoSitePlus" id="O08786"/>
<dbReference type="PaxDb" id="10090-ENSMUSP00000031093"/>
<dbReference type="ProteomicsDB" id="265371"/>
<dbReference type="Antibodypedia" id="3359">
    <property type="antibodies" value="437 antibodies from 37 providers"/>
</dbReference>
<dbReference type="DNASU" id="12425"/>
<dbReference type="Ensembl" id="ENSMUST00000031093.5">
    <property type="protein sequence ID" value="ENSMUSP00000031093.4"/>
    <property type="gene ID" value="ENSMUSG00000029193.8"/>
</dbReference>
<dbReference type="GeneID" id="12425"/>
<dbReference type="KEGG" id="mmu:12425"/>
<dbReference type="UCSC" id="uc008xlm.2">
    <property type="organism name" value="mouse"/>
</dbReference>
<dbReference type="AGR" id="MGI:99478"/>
<dbReference type="CTD" id="886"/>
<dbReference type="MGI" id="MGI:99478">
    <property type="gene designation" value="Cckar"/>
</dbReference>
<dbReference type="VEuPathDB" id="HostDB:ENSMUSG00000029193"/>
<dbReference type="eggNOG" id="KOG3656">
    <property type="taxonomic scope" value="Eukaryota"/>
</dbReference>
<dbReference type="GeneTree" id="ENSGT01130000278338"/>
<dbReference type="InParanoid" id="O08786"/>
<dbReference type="OMA" id="NIAPPCE"/>
<dbReference type="OrthoDB" id="5987936at2759"/>
<dbReference type="PhylomeDB" id="O08786"/>
<dbReference type="TreeFam" id="TF315303"/>
<dbReference type="Reactome" id="R-MMU-375276">
    <property type="pathway name" value="Peptide ligand-binding receptors"/>
</dbReference>
<dbReference type="Reactome" id="R-MMU-416476">
    <property type="pathway name" value="G alpha (q) signalling events"/>
</dbReference>
<dbReference type="BioGRID-ORCS" id="12425">
    <property type="hits" value="0 hits in 77 CRISPR screens"/>
</dbReference>
<dbReference type="ChiTaRS" id="Cckar">
    <property type="organism name" value="mouse"/>
</dbReference>
<dbReference type="PRO" id="PR:O08786"/>
<dbReference type="Proteomes" id="UP000000589">
    <property type="component" value="Chromosome 5"/>
</dbReference>
<dbReference type="RNAct" id="O08786">
    <property type="molecule type" value="protein"/>
</dbReference>
<dbReference type="Bgee" id="ENSMUSG00000029193">
    <property type="expression patterns" value="Expressed in epithelium of stomach and 57 other cell types or tissues"/>
</dbReference>
<dbReference type="ExpressionAtlas" id="O08786">
    <property type="expression patterns" value="baseline and differential"/>
</dbReference>
<dbReference type="GO" id="GO:0005829">
    <property type="term" value="C:cytosol"/>
    <property type="evidence" value="ECO:0007669"/>
    <property type="project" value="Ensembl"/>
</dbReference>
<dbReference type="GO" id="GO:0005654">
    <property type="term" value="C:nucleoplasm"/>
    <property type="evidence" value="ECO:0007669"/>
    <property type="project" value="Ensembl"/>
</dbReference>
<dbReference type="GO" id="GO:0005886">
    <property type="term" value="C:plasma membrane"/>
    <property type="evidence" value="ECO:0007669"/>
    <property type="project" value="UniProtKB-SubCell"/>
</dbReference>
<dbReference type="GO" id="GO:0004951">
    <property type="term" value="F:cholecystokinin receptor activity"/>
    <property type="evidence" value="ECO:0007669"/>
    <property type="project" value="Ensembl"/>
</dbReference>
<dbReference type="GO" id="GO:0017046">
    <property type="term" value="F:peptide hormone binding"/>
    <property type="evidence" value="ECO:0007669"/>
    <property type="project" value="Ensembl"/>
</dbReference>
<dbReference type="GO" id="GO:0007409">
    <property type="term" value="P:axonogenesis"/>
    <property type="evidence" value="ECO:0000315"/>
    <property type="project" value="MGI"/>
</dbReference>
<dbReference type="GO" id="GO:0030900">
    <property type="term" value="P:forebrain development"/>
    <property type="evidence" value="ECO:0000315"/>
    <property type="project" value="MGI"/>
</dbReference>
<dbReference type="GO" id="GO:0001764">
    <property type="term" value="P:neuron migration"/>
    <property type="evidence" value="ECO:0000315"/>
    <property type="project" value="MGI"/>
</dbReference>
<dbReference type="FunFam" id="1.20.1070.10:FF:000168">
    <property type="entry name" value="Cholecystokinin receptor type A"/>
    <property type="match status" value="1"/>
</dbReference>
<dbReference type="FunFam" id="1.20.1070.10:FF:000254">
    <property type="entry name" value="Cholecystokinin receptor type A"/>
    <property type="match status" value="1"/>
</dbReference>
<dbReference type="FunFam" id="4.10.670.10:FF:000001">
    <property type="entry name" value="cholecystokinin receptor type A"/>
    <property type="match status" value="1"/>
</dbReference>
<dbReference type="Gene3D" id="4.10.670.10">
    <property type="entry name" value="Cholecystokinin A receptor, N-terminal domain"/>
    <property type="match status" value="1"/>
</dbReference>
<dbReference type="Gene3D" id="1.20.1070.10">
    <property type="entry name" value="Rhodopsin 7-helix transmembrane proteins"/>
    <property type="match status" value="1"/>
</dbReference>
<dbReference type="InterPro" id="IPR009126">
    <property type="entry name" value="Cholcskin_rcpt"/>
</dbReference>
<dbReference type="InterPro" id="IPR000596">
    <property type="entry name" value="Cholcy_rcpt_A"/>
</dbReference>
<dbReference type="InterPro" id="IPR015276">
    <property type="entry name" value="CholecystokininA_recpt_N"/>
</dbReference>
<dbReference type="InterPro" id="IPR036472">
    <property type="entry name" value="CholecystokininA_recpt_N_sf"/>
</dbReference>
<dbReference type="InterPro" id="IPR000276">
    <property type="entry name" value="GPCR_Rhodpsn"/>
</dbReference>
<dbReference type="InterPro" id="IPR017452">
    <property type="entry name" value="GPCR_Rhodpsn_7TM"/>
</dbReference>
<dbReference type="PANTHER" id="PTHR24238:SF81">
    <property type="entry name" value="CHOLECYSTOKININ RECEPTOR TYPE A"/>
    <property type="match status" value="1"/>
</dbReference>
<dbReference type="PANTHER" id="PTHR24238">
    <property type="entry name" value="G-PROTEIN COUPLED RECEPTOR"/>
    <property type="match status" value="1"/>
</dbReference>
<dbReference type="Pfam" id="PF00001">
    <property type="entry name" value="7tm_1"/>
    <property type="match status" value="1"/>
</dbReference>
<dbReference type="Pfam" id="PF09193">
    <property type="entry name" value="CholecysA-Rec_N"/>
    <property type="match status" value="1"/>
</dbReference>
<dbReference type="PRINTS" id="PR01822">
    <property type="entry name" value="CCYSTOKININR"/>
</dbReference>
<dbReference type="PRINTS" id="PR00524">
    <property type="entry name" value="CCYSTOKNINAR"/>
</dbReference>
<dbReference type="PRINTS" id="PR00237">
    <property type="entry name" value="GPCRRHODOPSN"/>
</dbReference>
<dbReference type="SMART" id="SM01381">
    <property type="entry name" value="7TM_GPCR_Srsx"/>
    <property type="match status" value="1"/>
</dbReference>
<dbReference type="SUPFAM" id="SSF81321">
    <property type="entry name" value="Family A G protein-coupled receptor-like"/>
    <property type="match status" value="1"/>
</dbReference>
<dbReference type="PROSITE" id="PS00237">
    <property type="entry name" value="G_PROTEIN_RECEP_F1_1"/>
    <property type="match status" value="1"/>
</dbReference>
<dbReference type="PROSITE" id="PS50262">
    <property type="entry name" value="G_PROTEIN_RECEP_F1_2"/>
    <property type="match status" value="1"/>
</dbReference>
<protein>
    <recommendedName>
        <fullName>Cholecystokinin receptor type A</fullName>
        <shortName>CCK-A receptor</shortName>
        <shortName>CCK-AR</shortName>
    </recommendedName>
    <alternativeName>
        <fullName>Cholecystokinin-1 receptor</fullName>
        <shortName>CCK1-R</shortName>
    </alternativeName>
</protein>
<reference key="1">
    <citation type="journal article" date="1997" name="Gene">
        <title>Mouse cholecystokinin type-A receptor gene and its structural analysis.</title>
        <authorList>
            <person name="Takata Y."/>
            <person name="Takiguchi S."/>
            <person name="Takaoka K."/>
            <person name="Funakoshi A."/>
            <person name="Miyasaka K."/>
            <person name="Kono A."/>
        </authorList>
    </citation>
    <scope>NUCLEOTIDE SEQUENCE [GENOMIC DNA]</scope>
    <source>
        <strain>129/SvJ</strain>
        <tissue>Liver</tissue>
    </source>
</reference>
<reference key="2">
    <citation type="journal article" date="1997" name="Biochem. Biophys. Res. Commun.">
        <title>Molecular structure of the mouse CCK-A receptor gene.</title>
        <authorList>
            <person name="Lacourse K.A."/>
            <person name="Lay J.M."/>
            <person name="Swanberg L.J."/>
            <person name="Jenkins C."/>
            <person name="Samuelson L.C."/>
        </authorList>
    </citation>
    <scope>NUCLEOTIDE SEQUENCE</scope>
    <source>
        <strain>129/SvJ</strain>
    </source>
</reference>
<reference key="3">
    <citation type="journal article" date="2005" name="Science">
        <title>The transcriptional landscape of the mammalian genome.</title>
        <authorList>
            <person name="Carninci P."/>
            <person name="Kasukawa T."/>
            <person name="Katayama S."/>
            <person name="Gough J."/>
            <person name="Frith M.C."/>
            <person name="Maeda N."/>
            <person name="Oyama R."/>
            <person name="Ravasi T."/>
            <person name="Lenhard B."/>
            <person name="Wells C."/>
            <person name="Kodzius R."/>
            <person name="Shimokawa K."/>
            <person name="Bajic V.B."/>
            <person name="Brenner S.E."/>
            <person name="Batalov S."/>
            <person name="Forrest A.R."/>
            <person name="Zavolan M."/>
            <person name="Davis M.J."/>
            <person name="Wilming L.G."/>
            <person name="Aidinis V."/>
            <person name="Allen J.E."/>
            <person name="Ambesi-Impiombato A."/>
            <person name="Apweiler R."/>
            <person name="Aturaliya R.N."/>
            <person name="Bailey T.L."/>
            <person name="Bansal M."/>
            <person name="Baxter L."/>
            <person name="Beisel K.W."/>
            <person name="Bersano T."/>
            <person name="Bono H."/>
            <person name="Chalk A.M."/>
            <person name="Chiu K.P."/>
            <person name="Choudhary V."/>
            <person name="Christoffels A."/>
            <person name="Clutterbuck D.R."/>
            <person name="Crowe M.L."/>
            <person name="Dalla E."/>
            <person name="Dalrymple B.P."/>
            <person name="de Bono B."/>
            <person name="Della Gatta G."/>
            <person name="di Bernardo D."/>
            <person name="Down T."/>
            <person name="Engstrom P."/>
            <person name="Fagiolini M."/>
            <person name="Faulkner G."/>
            <person name="Fletcher C.F."/>
            <person name="Fukushima T."/>
            <person name="Furuno M."/>
            <person name="Futaki S."/>
            <person name="Gariboldi M."/>
            <person name="Georgii-Hemming P."/>
            <person name="Gingeras T.R."/>
            <person name="Gojobori T."/>
            <person name="Green R.E."/>
            <person name="Gustincich S."/>
            <person name="Harbers M."/>
            <person name="Hayashi Y."/>
            <person name="Hensch T.K."/>
            <person name="Hirokawa N."/>
            <person name="Hill D."/>
            <person name="Huminiecki L."/>
            <person name="Iacono M."/>
            <person name="Ikeo K."/>
            <person name="Iwama A."/>
            <person name="Ishikawa T."/>
            <person name="Jakt M."/>
            <person name="Kanapin A."/>
            <person name="Katoh M."/>
            <person name="Kawasawa Y."/>
            <person name="Kelso J."/>
            <person name="Kitamura H."/>
            <person name="Kitano H."/>
            <person name="Kollias G."/>
            <person name="Krishnan S.P."/>
            <person name="Kruger A."/>
            <person name="Kummerfeld S.K."/>
            <person name="Kurochkin I.V."/>
            <person name="Lareau L.F."/>
            <person name="Lazarevic D."/>
            <person name="Lipovich L."/>
            <person name="Liu J."/>
            <person name="Liuni S."/>
            <person name="McWilliam S."/>
            <person name="Madan Babu M."/>
            <person name="Madera M."/>
            <person name="Marchionni L."/>
            <person name="Matsuda H."/>
            <person name="Matsuzawa S."/>
            <person name="Miki H."/>
            <person name="Mignone F."/>
            <person name="Miyake S."/>
            <person name="Morris K."/>
            <person name="Mottagui-Tabar S."/>
            <person name="Mulder N."/>
            <person name="Nakano N."/>
            <person name="Nakauchi H."/>
            <person name="Ng P."/>
            <person name="Nilsson R."/>
            <person name="Nishiguchi S."/>
            <person name="Nishikawa S."/>
            <person name="Nori F."/>
            <person name="Ohara O."/>
            <person name="Okazaki Y."/>
            <person name="Orlando V."/>
            <person name="Pang K.C."/>
            <person name="Pavan W.J."/>
            <person name="Pavesi G."/>
            <person name="Pesole G."/>
            <person name="Petrovsky N."/>
            <person name="Piazza S."/>
            <person name="Reed J."/>
            <person name="Reid J.F."/>
            <person name="Ring B.Z."/>
            <person name="Ringwald M."/>
            <person name="Rost B."/>
            <person name="Ruan Y."/>
            <person name="Salzberg S.L."/>
            <person name="Sandelin A."/>
            <person name="Schneider C."/>
            <person name="Schoenbach C."/>
            <person name="Sekiguchi K."/>
            <person name="Semple C.A."/>
            <person name="Seno S."/>
            <person name="Sessa L."/>
            <person name="Sheng Y."/>
            <person name="Shibata Y."/>
            <person name="Shimada H."/>
            <person name="Shimada K."/>
            <person name="Silva D."/>
            <person name="Sinclair B."/>
            <person name="Sperling S."/>
            <person name="Stupka E."/>
            <person name="Sugiura K."/>
            <person name="Sultana R."/>
            <person name="Takenaka Y."/>
            <person name="Taki K."/>
            <person name="Tammoja K."/>
            <person name="Tan S.L."/>
            <person name="Tang S."/>
            <person name="Taylor M.S."/>
            <person name="Tegner J."/>
            <person name="Teichmann S.A."/>
            <person name="Ueda H.R."/>
            <person name="van Nimwegen E."/>
            <person name="Verardo R."/>
            <person name="Wei C.L."/>
            <person name="Yagi K."/>
            <person name="Yamanishi H."/>
            <person name="Zabarovsky E."/>
            <person name="Zhu S."/>
            <person name="Zimmer A."/>
            <person name="Hide W."/>
            <person name="Bult C."/>
            <person name="Grimmond S.M."/>
            <person name="Teasdale R.D."/>
            <person name="Liu E.T."/>
            <person name="Brusic V."/>
            <person name="Quackenbush J."/>
            <person name="Wahlestedt C."/>
            <person name="Mattick J.S."/>
            <person name="Hume D.A."/>
            <person name="Kai C."/>
            <person name="Sasaki D."/>
            <person name="Tomaru Y."/>
            <person name="Fukuda S."/>
            <person name="Kanamori-Katayama M."/>
            <person name="Suzuki M."/>
            <person name="Aoki J."/>
            <person name="Arakawa T."/>
            <person name="Iida J."/>
            <person name="Imamura K."/>
            <person name="Itoh M."/>
            <person name="Kato T."/>
            <person name="Kawaji H."/>
            <person name="Kawagashira N."/>
            <person name="Kawashima T."/>
            <person name="Kojima M."/>
            <person name="Kondo S."/>
            <person name="Konno H."/>
            <person name="Nakano K."/>
            <person name="Ninomiya N."/>
            <person name="Nishio T."/>
            <person name="Okada M."/>
            <person name="Plessy C."/>
            <person name="Shibata K."/>
            <person name="Shiraki T."/>
            <person name="Suzuki S."/>
            <person name="Tagami M."/>
            <person name="Waki K."/>
            <person name="Watahiki A."/>
            <person name="Okamura-Oho Y."/>
            <person name="Suzuki H."/>
            <person name="Kawai J."/>
            <person name="Hayashizaki Y."/>
        </authorList>
    </citation>
    <scope>NUCLEOTIDE SEQUENCE [LARGE SCALE MRNA]</scope>
    <source>
        <strain>C57BL/6J</strain>
        <tissue>Lung</tissue>
    </source>
</reference>
<reference key="4">
    <citation type="journal article" date="2004" name="Genome Res.">
        <title>The status, quality, and expansion of the NIH full-length cDNA project: the Mammalian Gene Collection (MGC).</title>
        <authorList>
            <consortium name="The MGC Project Team"/>
        </authorList>
    </citation>
    <scope>NUCLEOTIDE SEQUENCE [LARGE SCALE MRNA]</scope>
</reference>
<reference key="5">
    <citation type="journal article" date="2010" name="Cell">
        <title>A tissue-specific atlas of mouse protein phosphorylation and expression.</title>
        <authorList>
            <person name="Huttlin E.L."/>
            <person name="Jedrychowski M.P."/>
            <person name="Elias J.E."/>
            <person name="Goswami T."/>
            <person name="Rad R."/>
            <person name="Beausoleil S.A."/>
            <person name="Villen J."/>
            <person name="Haas W."/>
            <person name="Sowa M.E."/>
            <person name="Gygi S.P."/>
        </authorList>
    </citation>
    <scope>IDENTIFICATION BY MASS SPECTROMETRY [LARGE SCALE ANALYSIS]</scope>
    <source>
        <tissue>Pancreas</tissue>
    </source>
</reference>
<name>CCKAR_MOUSE</name>
<proteinExistence type="evidence at protein level"/>
<keyword id="KW-1003">Cell membrane</keyword>
<keyword id="KW-1015">Disulfide bond</keyword>
<keyword id="KW-0297">G-protein coupled receptor</keyword>
<keyword id="KW-0325">Glycoprotein</keyword>
<keyword id="KW-0449">Lipoprotein</keyword>
<keyword id="KW-0472">Membrane</keyword>
<keyword id="KW-0564">Palmitate</keyword>
<keyword id="KW-0675">Receptor</keyword>
<keyword id="KW-1185">Reference proteome</keyword>
<keyword id="KW-0807">Transducer</keyword>
<keyword id="KW-0812">Transmembrane</keyword>
<keyword id="KW-1133">Transmembrane helix</keyword>
<organism>
    <name type="scientific">Mus musculus</name>
    <name type="common">Mouse</name>
    <dbReference type="NCBI Taxonomy" id="10090"/>
    <lineage>
        <taxon>Eukaryota</taxon>
        <taxon>Metazoa</taxon>
        <taxon>Chordata</taxon>
        <taxon>Craniata</taxon>
        <taxon>Vertebrata</taxon>
        <taxon>Euteleostomi</taxon>
        <taxon>Mammalia</taxon>
        <taxon>Eutheria</taxon>
        <taxon>Euarchontoglires</taxon>
        <taxon>Glires</taxon>
        <taxon>Rodentia</taxon>
        <taxon>Myomorpha</taxon>
        <taxon>Muroidea</taxon>
        <taxon>Muridae</taxon>
        <taxon>Murinae</taxon>
        <taxon>Mus</taxon>
        <taxon>Mus</taxon>
    </lineage>
</organism>
<accession>O08786</accession>
<accession>Q8VCC7</accession>
<accession>Q9DBV6</accession>
<comment type="function">
    <text evidence="1">Receptor for cholecystokinin. Mediates pancreatic growth and enzyme secretion, smooth muscle contraction of the gall bladder and stomach. Has a 1000-fold higher affinity for CCK rather than for gastrin. It modulates feeding and dopamine-induced behavior in the central and peripheral nervous system. This receptor mediates its action by association with G proteins that activate a phosphatidylinositol-calcium second messenger system (By similarity).</text>
</comment>
<comment type="subcellular location">
    <subcellularLocation>
        <location>Cell membrane</location>
        <topology>Multi-pass membrane protein</topology>
    </subcellularLocation>
</comment>
<comment type="similarity">
    <text evidence="3">Belongs to the G-protein coupled receptor 1 family.</text>
</comment>
<feature type="chain" id="PRO_0000069224" description="Cholecystokinin receptor type A">
    <location>
        <begin position="1"/>
        <end position="436"/>
    </location>
</feature>
<feature type="topological domain" description="Extracellular" evidence="2">
    <location>
        <begin position="1"/>
        <end position="41"/>
    </location>
</feature>
<feature type="transmembrane region" description="Helical; Name=1" evidence="2">
    <location>
        <begin position="42"/>
        <end position="67"/>
    </location>
</feature>
<feature type="topological domain" description="Cytoplasmic" evidence="2">
    <location>
        <begin position="68"/>
        <end position="77"/>
    </location>
</feature>
<feature type="transmembrane region" description="Helical; Name=2" evidence="2">
    <location>
        <begin position="78"/>
        <end position="104"/>
    </location>
</feature>
<feature type="topological domain" description="Extracellular" evidence="2">
    <location>
        <begin position="105"/>
        <end position="115"/>
    </location>
</feature>
<feature type="transmembrane region" description="Helical; Name=3" evidence="2">
    <location>
        <begin position="116"/>
        <end position="137"/>
    </location>
</feature>
<feature type="topological domain" description="Cytoplasmic" evidence="2">
    <location>
        <begin position="138"/>
        <end position="157"/>
    </location>
</feature>
<feature type="transmembrane region" description="Helical; Name=4" evidence="2">
    <location>
        <begin position="158"/>
        <end position="178"/>
    </location>
</feature>
<feature type="topological domain" description="Extracellular" evidence="2">
    <location>
        <begin position="179"/>
        <end position="210"/>
    </location>
</feature>
<feature type="transmembrane region" description="Helical; Name=5" evidence="2">
    <location>
        <begin position="211"/>
        <end position="234"/>
    </location>
</feature>
<feature type="topological domain" description="Cytoplasmic" evidence="2">
    <location>
        <begin position="235"/>
        <end position="321"/>
    </location>
</feature>
<feature type="transmembrane region" description="Helical; Name=6" evidence="2">
    <location>
        <begin position="322"/>
        <end position="342"/>
    </location>
</feature>
<feature type="topological domain" description="Extracellular" evidence="2">
    <location>
        <begin position="343"/>
        <end position="357"/>
    </location>
</feature>
<feature type="transmembrane region" description="Helical; Name=7" evidence="2">
    <location>
        <begin position="358"/>
        <end position="381"/>
    </location>
</feature>
<feature type="topological domain" description="Cytoplasmic" evidence="2">
    <location>
        <begin position="382"/>
        <end position="436"/>
    </location>
</feature>
<feature type="region of interest" description="Disordered" evidence="4">
    <location>
        <begin position="252"/>
        <end position="280"/>
    </location>
</feature>
<feature type="lipid moiety-binding region" description="S-palmitoyl cysteine" evidence="1">
    <location>
        <position position="395"/>
    </location>
</feature>
<feature type="glycosylation site" description="N-linked (GlcNAc...) asparagine" evidence="2">
    <location>
        <position position="10"/>
    </location>
</feature>
<feature type="glycosylation site" description="N-linked (GlcNAc...) asparagine" evidence="2">
    <location>
        <position position="24"/>
    </location>
</feature>
<feature type="glycosylation site" description="N-linked (GlcNAc...) asparagine" evidence="2">
    <location>
        <position position="190"/>
    </location>
</feature>
<feature type="disulfide bond" evidence="3">
    <location>
        <begin position="18"/>
        <end position="29"/>
    </location>
</feature>
<feature type="disulfide bond" evidence="3">
    <location>
        <begin position="114"/>
        <end position="196"/>
    </location>
</feature>
<feature type="sequence conflict" description="In Ref. 3; BAB23512." evidence="5" ref="3">
    <original>Q</original>
    <variation>H</variation>
    <location>
        <position position="34"/>
    </location>
</feature>
<feature type="sequence conflict" description="In Ref. 3; BAB23512." evidence="5" ref="3">
    <original>N</original>
    <variation>D</variation>
    <location>
        <position position="59"/>
    </location>
</feature>
<feature type="sequence conflict" description="In Ref. 4; AAH20534." evidence="5" ref="4">
    <original>H</original>
    <variation>P</variation>
    <location>
        <position position="436"/>
    </location>
</feature>